<organism>
    <name type="scientific">Enterococcus faecalis (strain ATCC 700802 / V583)</name>
    <dbReference type="NCBI Taxonomy" id="226185"/>
    <lineage>
        <taxon>Bacteria</taxon>
        <taxon>Bacillati</taxon>
        <taxon>Bacillota</taxon>
        <taxon>Bacilli</taxon>
        <taxon>Lactobacillales</taxon>
        <taxon>Enterococcaceae</taxon>
        <taxon>Enterococcus</taxon>
    </lineage>
</organism>
<dbReference type="EMBL" id="AE016830">
    <property type="protein sequence ID" value="AAO80232.1"/>
    <property type="molecule type" value="Genomic_DNA"/>
</dbReference>
<dbReference type="RefSeq" id="NP_814161.1">
    <property type="nucleotide sequence ID" value="NC_004668.1"/>
</dbReference>
<dbReference type="RefSeq" id="WP_002355233.1">
    <property type="nucleotide sequence ID" value="NZ_KE136524.1"/>
</dbReference>
<dbReference type="SMR" id="Q838R5"/>
<dbReference type="STRING" id="226185.EF_0370"/>
<dbReference type="EnsemblBacteria" id="AAO80232">
    <property type="protein sequence ID" value="AAO80232"/>
    <property type="gene ID" value="EF_0370"/>
</dbReference>
<dbReference type="GeneID" id="60892822"/>
<dbReference type="KEGG" id="efa:EF0370"/>
<dbReference type="PATRIC" id="fig|226185.45.peg.2959"/>
<dbReference type="eggNOG" id="COG4477">
    <property type="taxonomic scope" value="Bacteria"/>
</dbReference>
<dbReference type="HOGENOM" id="CLU_034079_2_0_9"/>
<dbReference type="Proteomes" id="UP000001415">
    <property type="component" value="Chromosome"/>
</dbReference>
<dbReference type="GO" id="GO:0005886">
    <property type="term" value="C:plasma membrane"/>
    <property type="evidence" value="ECO:0007669"/>
    <property type="project" value="UniProtKB-SubCell"/>
</dbReference>
<dbReference type="GO" id="GO:0005940">
    <property type="term" value="C:septin ring"/>
    <property type="evidence" value="ECO:0007669"/>
    <property type="project" value="InterPro"/>
</dbReference>
<dbReference type="GO" id="GO:0000917">
    <property type="term" value="P:division septum assembly"/>
    <property type="evidence" value="ECO:0007669"/>
    <property type="project" value="UniProtKB-KW"/>
</dbReference>
<dbReference type="GO" id="GO:0000921">
    <property type="term" value="P:septin ring assembly"/>
    <property type="evidence" value="ECO:0007669"/>
    <property type="project" value="InterPro"/>
</dbReference>
<dbReference type="HAMAP" id="MF_00728">
    <property type="entry name" value="EzrA"/>
    <property type="match status" value="1"/>
</dbReference>
<dbReference type="InterPro" id="IPR010379">
    <property type="entry name" value="EzrA"/>
</dbReference>
<dbReference type="NCBIfam" id="NF003410">
    <property type="entry name" value="PRK04778.1-4"/>
    <property type="match status" value="1"/>
</dbReference>
<dbReference type="Pfam" id="PF06160">
    <property type="entry name" value="EzrA"/>
    <property type="match status" value="1"/>
</dbReference>
<name>EZRA_ENTFA</name>
<evidence type="ECO:0000255" key="1">
    <source>
        <dbReference type="HAMAP-Rule" id="MF_00728"/>
    </source>
</evidence>
<feature type="chain" id="PRO_0000172871" description="Septation ring formation regulator EzrA">
    <location>
        <begin position="1"/>
        <end position="578"/>
    </location>
</feature>
<feature type="topological domain" description="Extracellular" evidence="1">
    <location>
        <begin position="1"/>
        <end position="8"/>
    </location>
</feature>
<feature type="transmembrane region" description="Helical" evidence="1">
    <location>
        <begin position="9"/>
        <end position="27"/>
    </location>
</feature>
<feature type="topological domain" description="Cytoplasmic" evidence="1">
    <location>
        <begin position="28"/>
        <end position="578"/>
    </location>
</feature>
<feature type="coiled-coil region" evidence="1">
    <location>
        <begin position="103"/>
        <end position="165"/>
    </location>
</feature>
<feature type="coiled-coil region" evidence="1">
    <location>
        <begin position="256"/>
        <end position="285"/>
    </location>
</feature>
<feature type="coiled-coil region" evidence="1">
    <location>
        <begin position="394"/>
        <end position="490"/>
    </location>
</feature>
<comment type="function">
    <text evidence="1">Negative regulator of FtsZ ring formation; modulates the frequency and position of FtsZ ring formation. Inhibits FtsZ ring formation at polar sites. Interacts either with FtsZ or with one of its binding partners to promote depolymerization.</text>
</comment>
<comment type="subcellular location">
    <subcellularLocation>
        <location>Cell membrane</location>
        <topology>Single-pass membrane protein</topology>
    </subcellularLocation>
    <text evidence="1">Colocalized with FtsZ to the nascent septal site.</text>
</comment>
<comment type="similarity">
    <text evidence="1">Belongs to the EzrA family.</text>
</comment>
<protein>
    <recommendedName>
        <fullName evidence="1">Septation ring formation regulator EzrA</fullName>
    </recommendedName>
</protein>
<proteinExistence type="inferred from homology"/>
<gene>
    <name evidence="1" type="primary">ezrA</name>
    <name type="ordered locus">EF_0370</name>
</gene>
<keyword id="KW-0131">Cell cycle</keyword>
<keyword id="KW-0132">Cell division</keyword>
<keyword id="KW-1003">Cell membrane</keyword>
<keyword id="KW-0175">Coiled coil</keyword>
<keyword id="KW-0472">Membrane</keyword>
<keyword id="KW-1185">Reference proteome</keyword>
<keyword id="KW-0717">Septation</keyword>
<keyword id="KW-0812">Transmembrane</keyword>
<keyword id="KW-1133">Transmembrane helix</keyword>
<sequence>MKNNWIIILVLVIVIIAAVLYLIGYFMRKKNQEQLDELEVRKEALFDLPVFEEIDDIKKMHLVGQSQNSFREWNQRWVELSTRSFAELESQIYEVENQNEIFRFMKAKKAVVEANETMTEMEAEVEVIRNGLKELRESEERNSLEVQKALDVYEELSKSLKDDKASFGPAYSEIQKQLRNVEIEFTQFVTLNTSGDPIEAREVLEDAERHTYELEDLMKRIPPMYEELNETFPDQLKEIEEGYNQLLADDYVFPEQNFAEEIQHAKKRVENSMADLEKTEIAAVEVANRDTATAIDALYEVMEREIEAKKYVVTNQKIIDDYISHSLKNNRQLMIELDHVSQSYTLNNNELGRSRGFQTEIEEIIRRQKDLEPRMKEHTVPYSEIQAFYKECYKILDDIENQQLEIDASLKELRKGEKVAQEKVDEYEFRLRSIKRYVEKQRLPGLSADYLEFFYVATDRIEDLSRALNKMRINMDEINRLCDLCEDDLELLDKKTKDLVNAAALTEQMMQYANRYRHTHENIRAALDKSMYLFSTEFRYQDALDEIGTALEAVEPGAFKRIEDFYFKNINNPNLTAI</sequence>
<reference key="1">
    <citation type="journal article" date="2003" name="Science">
        <title>Role of mobile DNA in the evolution of vancomycin-resistant Enterococcus faecalis.</title>
        <authorList>
            <person name="Paulsen I.T."/>
            <person name="Banerjei L."/>
            <person name="Myers G.S.A."/>
            <person name="Nelson K.E."/>
            <person name="Seshadri R."/>
            <person name="Read T.D."/>
            <person name="Fouts D.E."/>
            <person name="Eisen J.A."/>
            <person name="Gill S.R."/>
            <person name="Heidelberg J.F."/>
            <person name="Tettelin H."/>
            <person name="Dodson R.J."/>
            <person name="Umayam L.A."/>
            <person name="Brinkac L.M."/>
            <person name="Beanan M.J."/>
            <person name="Daugherty S.C."/>
            <person name="DeBoy R.T."/>
            <person name="Durkin S.A."/>
            <person name="Kolonay J.F."/>
            <person name="Madupu R."/>
            <person name="Nelson W.C."/>
            <person name="Vamathevan J.J."/>
            <person name="Tran B."/>
            <person name="Upton J."/>
            <person name="Hansen T."/>
            <person name="Shetty J."/>
            <person name="Khouri H.M."/>
            <person name="Utterback T.R."/>
            <person name="Radune D."/>
            <person name="Ketchum K.A."/>
            <person name="Dougherty B.A."/>
            <person name="Fraser C.M."/>
        </authorList>
    </citation>
    <scope>NUCLEOTIDE SEQUENCE [LARGE SCALE GENOMIC DNA]</scope>
    <source>
        <strain>ATCC 700802 / V583</strain>
    </source>
</reference>
<accession>Q838R5</accession>